<comment type="function">
    <text evidence="1">One of several proteins that assist in the late maturation steps of the functional core of the 30S ribosomal subunit. Associates with free 30S ribosomal subunits (but not with 30S subunits that are part of 70S ribosomes or polysomes). Required for efficient processing of 16S rRNA. May interact with the 5'-terminal helix region of 16S rRNA.</text>
</comment>
<comment type="subunit">
    <text evidence="1">Monomer. Binds 30S ribosomal subunits, but not 50S ribosomal subunits or 70S ribosomes.</text>
</comment>
<comment type="subcellular location">
    <subcellularLocation>
        <location evidence="1">Cytoplasm</location>
    </subcellularLocation>
</comment>
<comment type="similarity">
    <text evidence="1">Belongs to the RbfA family.</text>
</comment>
<sequence>MPNNYRLAKVSSLLKKEITLILQNDLENDLIRDHFVNISKIDLSGDLQHCKIYITSTAEEKVRKEIVENLNTAKSSIRHSLGKRIEMRRVPEIIFKDDVVLDKGLSVLKLLDELKNKNQNNNVEEKDAKS</sequence>
<organism>
    <name type="scientific">Prochlorococcus marinus (strain MIT 9301)</name>
    <dbReference type="NCBI Taxonomy" id="167546"/>
    <lineage>
        <taxon>Bacteria</taxon>
        <taxon>Bacillati</taxon>
        <taxon>Cyanobacteriota</taxon>
        <taxon>Cyanophyceae</taxon>
        <taxon>Synechococcales</taxon>
        <taxon>Prochlorococcaceae</taxon>
        <taxon>Prochlorococcus</taxon>
    </lineage>
</organism>
<gene>
    <name evidence="1" type="primary">rbfA</name>
    <name type="ordered locus">P9301_01291</name>
</gene>
<protein>
    <recommendedName>
        <fullName evidence="1">Ribosome-binding factor A</fullName>
    </recommendedName>
</protein>
<reference key="1">
    <citation type="journal article" date="2007" name="PLoS Genet.">
        <title>Patterns and implications of gene gain and loss in the evolution of Prochlorococcus.</title>
        <authorList>
            <person name="Kettler G.C."/>
            <person name="Martiny A.C."/>
            <person name="Huang K."/>
            <person name="Zucker J."/>
            <person name="Coleman M.L."/>
            <person name="Rodrigue S."/>
            <person name="Chen F."/>
            <person name="Lapidus A."/>
            <person name="Ferriera S."/>
            <person name="Johnson J."/>
            <person name="Steglich C."/>
            <person name="Church G.M."/>
            <person name="Richardson P."/>
            <person name="Chisholm S.W."/>
        </authorList>
    </citation>
    <scope>NUCLEOTIDE SEQUENCE [LARGE SCALE GENOMIC DNA]</scope>
    <source>
        <strain>MIT 9301</strain>
    </source>
</reference>
<accession>A3PAH7</accession>
<evidence type="ECO:0000255" key="1">
    <source>
        <dbReference type="HAMAP-Rule" id="MF_00003"/>
    </source>
</evidence>
<name>RBFA_PROM0</name>
<proteinExistence type="inferred from homology"/>
<dbReference type="EMBL" id="CP000576">
    <property type="protein sequence ID" value="ABO16752.1"/>
    <property type="molecule type" value="Genomic_DNA"/>
</dbReference>
<dbReference type="RefSeq" id="WP_011862155.1">
    <property type="nucleotide sequence ID" value="NC_009091.1"/>
</dbReference>
<dbReference type="SMR" id="A3PAH7"/>
<dbReference type="STRING" id="167546.P9301_01291"/>
<dbReference type="KEGG" id="pmg:P9301_01291"/>
<dbReference type="eggNOG" id="COG0858">
    <property type="taxonomic scope" value="Bacteria"/>
</dbReference>
<dbReference type="HOGENOM" id="CLU_089475_2_1_3"/>
<dbReference type="OrthoDB" id="307788at2"/>
<dbReference type="Proteomes" id="UP000001430">
    <property type="component" value="Chromosome"/>
</dbReference>
<dbReference type="GO" id="GO:0005829">
    <property type="term" value="C:cytosol"/>
    <property type="evidence" value="ECO:0007669"/>
    <property type="project" value="TreeGrafter"/>
</dbReference>
<dbReference type="GO" id="GO:0043024">
    <property type="term" value="F:ribosomal small subunit binding"/>
    <property type="evidence" value="ECO:0007669"/>
    <property type="project" value="TreeGrafter"/>
</dbReference>
<dbReference type="GO" id="GO:0030490">
    <property type="term" value="P:maturation of SSU-rRNA"/>
    <property type="evidence" value="ECO:0007669"/>
    <property type="project" value="UniProtKB-UniRule"/>
</dbReference>
<dbReference type="Gene3D" id="3.30.300.20">
    <property type="match status" value="1"/>
</dbReference>
<dbReference type="HAMAP" id="MF_00003">
    <property type="entry name" value="RbfA"/>
    <property type="match status" value="1"/>
</dbReference>
<dbReference type="InterPro" id="IPR015946">
    <property type="entry name" value="KH_dom-like_a/b"/>
</dbReference>
<dbReference type="InterPro" id="IPR000238">
    <property type="entry name" value="RbfA"/>
</dbReference>
<dbReference type="InterPro" id="IPR023799">
    <property type="entry name" value="RbfA_dom_sf"/>
</dbReference>
<dbReference type="InterPro" id="IPR020053">
    <property type="entry name" value="Ribosome-bd_factorA_CS"/>
</dbReference>
<dbReference type="NCBIfam" id="TIGR00082">
    <property type="entry name" value="rbfA"/>
    <property type="match status" value="1"/>
</dbReference>
<dbReference type="PANTHER" id="PTHR33515">
    <property type="entry name" value="RIBOSOME-BINDING FACTOR A, CHLOROPLASTIC-RELATED"/>
    <property type="match status" value="1"/>
</dbReference>
<dbReference type="PANTHER" id="PTHR33515:SF1">
    <property type="entry name" value="RIBOSOME-BINDING FACTOR A, CHLOROPLASTIC-RELATED"/>
    <property type="match status" value="1"/>
</dbReference>
<dbReference type="Pfam" id="PF02033">
    <property type="entry name" value="RBFA"/>
    <property type="match status" value="1"/>
</dbReference>
<dbReference type="SUPFAM" id="SSF89919">
    <property type="entry name" value="Ribosome-binding factor A, RbfA"/>
    <property type="match status" value="1"/>
</dbReference>
<dbReference type="PROSITE" id="PS01319">
    <property type="entry name" value="RBFA"/>
    <property type="match status" value="1"/>
</dbReference>
<feature type="chain" id="PRO_1000000164" description="Ribosome-binding factor A">
    <location>
        <begin position="1"/>
        <end position="130"/>
    </location>
</feature>
<keyword id="KW-0963">Cytoplasm</keyword>
<keyword id="KW-1185">Reference proteome</keyword>
<keyword id="KW-0690">Ribosome biogenesis</keyword>